<name>PSBI_PROM5</name>
<comment type="function">
    <text evidence="1">One of the components of the core complex of photosystem II (PSII), required for its stability and/or assembly. PSII is a light-driven water:plastoquinone oxidoreductase that uses light energy to abstract electrons from H(2)O, generating O(2) and a proton gradient subsequently used for ATP formation. It consists of a core antenna complex that captures photons, and an electron transfer chain that converts photonic excitation into a charge separation.</text>
</comment>
<comment type="subunit">
    <text evidence="2">PSII is composed of 1 copy each of membrane proteins PsbA, PsbB, PsbC, PsbD, PsbE, PsbF, PsbH, PsbI, PsbJ, PsbK, PsbL, PsbM, PsbT, PsbX, PsbY, Psb30/Ycf12, peripheral proteins PsbO, CyanoQ (PsbQ), PsbU, PsbV and a large number of cofactors. It forms dimeric complexes.</text>
</comment>
<comment type="subcellular location">
    <subcellularLocation>
        <location evidence="1">Cellular thylakoid membrane</location>
        <topology evidence="1">Single-pass membrane protein</topology>
    </subcellularLocation>
</comment>
<comment type="similarity">
    <text evidence="1">Belongs to the PsbI family.</text>
</comment>
<organism>
    <name type="scientific">Prochlorococcus marinus (strain MIT 9515)</name>
    <dbReference type="NCBI Taxonomy" id="167542"/>
    <lineage>
        <taxon>Bacteria</taxon>
        <taxon>Bacillati</taxon>
        <taxon>Cyanobacteriota</taxon>
        <taxon>Cyanophyceae</taxon>
        <taxon>Synechococcales</taxon>
        <taxon>Prochlorococcaceae</taxon>
        <taxon>Prochlorococcus</taxon>
    </lineage>
</organism>
<accession>A2BUN4</accession>
<proteinExistence type="inferred from homology"/>
<reference key="1">
    <citation type="journal article" date="2007" name="PLoS Genet.">
        <title>Patterns and implications of gene gain and loss in the evolution of Prochlorococcus.</title>
        <authorList>
            <person name="Kettler G.C."/>
            <person name="Martiny A.C."/>
            <person name="Huang K."/>
            <person name="Zucker J."/>
            <person name="Coleman M.L."/>
            <person name="Rodrigue S."/>
            <person name="Chen F."/>
            <person name="Lapidus A."/>
            <person name="Ferriera S."/>
            <person name="Johnson J."/>
            <person name="Steglich C."/>
            <person name="Church G.M."/>
            <person name="Richardson P."/>
            <person name="Chisholm S.W."/>
        </authorList>
    </citation>
    <scope>NUCLEOTIDE SEQUENCE [LARGE SCALE GENOMIC DNA]</scope>
    <source>
        <strain>MIT 9515</strain>
    </source>
</reference>
<sequence length="42" mass="4796">MLALKISVYTIVFFFVGIFLFGFLASDPTRTPNRKDLESPQD</sequence>
<feature type="chain" id="PRO_0000298299" description="Photosystem II reaction center protein I">
    <location>
        <begin position="1"/>
        <end position="42"/>
    </location>
</feature>
<feature type="transmembrane region" description="Helical" evidence="1">
    <location>
        <begin position="6"/>
        <end position="26"/>
    </location>
</feature>
<keyword id="KW-0472">Membrane</keyword>
<keyword id="KW-0602">Photosynthesis</keyword>
<keyword id="KW-0604">Photosystem II</keyword>
<keyword id="KW-0674">Reaction center</keyword>
<keyword id="KW-0793">Thylakoid</keyword>
<keyword id="KW-0812">Transmembrane</keyword>
<keyword id="KW-1133">Transmembrane helix</keyword>
<gene>
    <name evidence="1" type="primary">psbI</name>
    <name type="ordered locus">P9515_02861</name>
</gene>
<evidence type="ECO:0000255" key="1">
    <source>
        <dbReference type="HAMAP-Rule" id="MF_01316"/>
    </source>
</evidence>
<evidence type="ECO:0000305" key="2"/>
<dbReference type="EMBL" id="CP000552">
    <property type="protein sequence ID" value="ABM71495.1"/>
    <property type="molecule type" value="Genomic_DNA"/>
</dbReference>
<dbReference type="RefSeq" id="WP_002805124.1">
    <property type="nucleotide sequence ID" value="NC_008817.1"/>
</dbReference>
<dbReference type="SMR" id="A2BUN4"/>
<dbReference type="STRING" id="167542.P9515_02861"/>
<dbReference type="GeneID" id="60200521"/>
<dbReference type="KEGG" id="pmc:P9515_02861"/>
<dbReference type="HOGENOM" id="CLU_212150_0_0_3"/>
<dbReference type="Proteomes" id="UP000001589">
    <property type="component" value="Chromosome"/>
</dbReference>
<dbReference type="GO" id="GO:0009539">
    <property type="term" value="C:photosystem II reaction center"/>
    <property type="evidence" value="ECO:0007669"/>
    <property type="project" value="InterPro"/>
</dbReference>
<dbReference type="GO" id="GO:0031676">
    <property type="term" value="C:plasma membrane-derived thylakoid membrane"/>
    <property type="evidence" value="ECO:0007669"/>
    <property type="project" value="UniProtKB-SubCell"/>
</dbReference>
<dbReference type="GO" id="GO:0015979">
    <property type="term" value="P:photosynthesis"/>
    <property type="evidence" value="ECO:0007669"/>
    <property type="project" value="UniProtKB-UniRule"/>
</dbReference>
<dbReference type="HAMAP" id="MF_01316">
    <property type="entry name" value="PSII_PsbI"/>
    <property type="match status" value="1"/>
</dbReference>
<dbReference type="InterPro" id="IPR003686">
    <property type="entry name" value="PSII_PsbI"/>
</dbReference>
<dbReference type="InterPro" id="IPR037271">
    <property type="entry name" value="PSII_PsbI_sf"/>
</dbReference>
<dbReference type="NCBIfam" id="NF002735">
    <property type="entry name" value="PRK02655.1"/>
    <property type="match status" value="1"/>
</dbReference>
<dbReference type="PANTHER" id="PTHR35772">
    <property type="entry name" value="PHOTOSYSTEM II REACTION CENTER PROTEIN I"/>
    <property type="match status" value="1"/>
</dbReference>
<dbReference type="PANTHER" id="PTHR35772:SF1">
    <property type="entry name" value="PHOTOSYSTEM II REACTION CENTER PROTEIN I"/>
    <property type="match status" value="1"/>
</dbReference>
<dbReference type="Pfam" id="PF02532">
    <property type="entry name" value="PsbI"/>
    <property type="match status" value="1"/>
</dbReference>
<dbReference type="SUPFAM" id="SSF161041">
    <property type="entry name" value="Photosystem II reaction center protein I, PsbI"/>
    <property type="match status" value="1"/>
</dbReference>
<protein>
    <recommendedName>
        <fullName evidence="1">Photosystem II reaction center protein I</fullName>
        <shortName evidence="1">PSII-I</shortName>
    </recommendedName>
    <alternativeName>
        <fullName evidence="1">PSII 4.4 kDa protein</fullName>
    </alternativeName>
</protein>